<feature type="chain" id="PRO_0000357019" description="Kynureninase">
    <location>
        <begin position="1"/>
        <end position="423"/>
    </location>
</feature>
<feature type="binding site" evidence="1">
    <location>
        <position position="105"/>
    </location>
    <ligand>
        <name>pyridoxal 5'-phosphate</name>
        <dbReference type="ChEBI" id="CHEBI:597326"/>
    </ligand>
</feature>
<feature type="binding site" evidence="1">
    <location>
        <position position="106"/>
    </location>
    <ligand>
        <name>pyridoxal 5'-phosphate</name>
        <dbReference type="ChEBI" id="CHEBI:597326"/>
    </ligand>
</feature>
<feature type="binding site" evidence="1">
    <location>
        <begin position="133"/>
        <end position="136"/>
    </location>
    <ligand>
        <name>pyridoxal 5'-phosphate</name>
        <dbReference type="ChEBI" id="CHEBI:597326"/>
    </ligand>
</feature>
<feature type="binding site" evidence="1">
    <location>
        <position position="218"/>
    </location>
    <ligand>
        <name>pyridoxal 5'-phosphate</name>
        <dbReference type="ChEBI" id="CHEBI:597326"/>
    </ligand>
</feature>
<feature type="binding site" evidence="1">
    <location>
        <position position="221"/>
    </location>
    <ligand>
        <name>pyridoxal 5'-phosphate</name>
        <dbReference type="ChEBI" id="CHEBI:597326"/>
    </ligand>
</feature>
<feature type="binding site" evidence="1">
    <location>
        <position position="243"/>
    </location>
    <ligand>
        <name>pyridoxal 5'-phosphate</name>
        <dbReference type="ChEBI" id="CHEBI:597326"/>
    </ligand>
</feature>
<feature type="binding site" evidence="1">
    <location>
        <position position="273"/>
    </location>
    <ligand>
        <name>pyridoxal 5'-phosphate</name>
        <dbReference type="ChEBI" id="CHEBI:597326"/>
    </ligand>
</feature>
<feature type="binding site" evidence="1">
    <location>
        <position position="301"/>
    </location>
    <ligand>
        <name>pyridoxal 5'-phosphate</name>
        <dbReference type="ChEBI" id="CHEBI:597326"/>
    </ligand>
</feature>
<feature type="modified residue" description="N6-(pyridoxal phosphate)lysine" evidence="1">
    <location>
        <position position="244"/>
    </location>
</feature>
<proteinExistence type="inferred from homology"/>
<organism>
    <name type="scientific">Xanthomonas oryzae pv. oryzae (strain MAFF 311018)</name>
    <dbReference type="NCBI Taxonomy" id="342109"/>
    <lineage>
        <taxon>Bacteria</taxon>
        <taxon>Pseudomonadati</taxon>
        <taxon>Pseudomonadota</taxon>
        <taxon>Gammaproteobacteria</taxon>
        <taxon>Lysobacterales</taxon>
        <taxon>Lysobacteraceae</taxon>
        <taxon>Xanthomonas</taxon>
    </lineage>
</organism>
<accession>Q2P317</accession>
<keyword id="KW-0378">Hydrolase</keyword>
<keyword id="KW-0662">Pyridine nucleotide biosynthesis</keyword>
<keyword id="KW-0663">Pyridoxal phosphate</keyword>
<gene>
    <name evidence="1" type="primary">kynU</name>
    <name type="ordered locus">XOO2305</name>
</gene>
<reference key="1">
    <citation type="journal article" date="2005" name="Jpn. Agric. Res. Q.">
        <title>Genome sequence of Xanthomonas oryzae pv. oryzae suggests contribution of large numbers of effector genes and insertion sequences to its race diversity.</title>
        <authorList>
            <person name="Ochiai H."/>
            <person name="Inoue Y."/>
            <person name="Takeya M."/>
            <person name="Sasaki A."/>
            <person name="Kaku H."/>
        </authorList>
    </citation>
    <scope>NUCLEOTIDE SEQUENCE [LARGE SCALE GENOMIC DNA]</scope>
    <source>
        <strain>MAFF 311018</strain>
    </source>
</reference>
<dbReference type="EC" id="3.7.1.3" evidence="1"/>
<dbReference type="EMBL" id="AP008229">
    <property type="protein sequence ID" value="BAE69060.1"/>
    <property type="molecule type" value="Genomic_DNA"/>
</dbReference>
<dbReference type="RefSeq" id="WP_011408606.1">
    <property type="nucleotide sequence ID" value="NC_007705.1"/>
</dbReference>
<dbReference type="SMR" id="Q2P317"/>
<dbReference type="KEGG" id="xom:XOO2305"/>
<dbReference type="HOGENOM" id="CLU_003433_4_0_6"/>
<dbReference type="UniPathway" id="UPA00253">
    <property type="reaction ID" value="UER00329"/>
</dbReference>
<dbReference type="UniPathway" id="UPA00334">
    <property type="reaction ID" value="UER00455"/>
</dbReference>
<dbReference type="GO" id="GO:0005737">
    <property type="term" value="C:cytoplasm"/>
    <property type="evidence" value="ECO:0007669"/>
    <property type="project" value="InterPro"/>
</dbReference>
<dbReference type="GO" id="GO:0030429">
    <property type="term" value="F:kynureninase activity"/>
    <property type="evidence" value="ECO:0007669"/>
    <property type="project" value="UniProtKB-UniRule"/>
</dbReference>
<dbReference type="GO" id="GO:0030170">
    <property type="term" value="F:pyridoxal phosphate binding"/>
    <property type="evidence" value="ECO:0007669"/>
    <property type="project" value="UniProtKB-UniRule"/>
</dbReference>
<dbReference type="GO" id="GO:0043420">
    <property type="term" value="P:anthranilate metabolic process"/>
    <property type="evidence" value="ECO:0007669"/>
    <property type="project" value="TreeGrafter"/>
</dbReference>
<dbReference type="GO" id="GO:0097053">
    <property type="term" value="P:L-kynurenine catabolic process"/>
    <property type="evidence" value="ECO:0007669"/>
    <property type="project" value="UniProtKB-UniRule"/>
</dbReference>
<dbReference type="GO" id="GO:0019441">
    <property type="term" value="P:L-tryptophan catabolic process to kynurenine"/>
    <property type="evidence" value="ECO:0007669"/>
    <property type="project" value="TreeGrafter"/>
</dbReference>
<dbReference type="GO" id="GO:0009435">
    <property type="term" value="P:NAD biosynthetic process"/>
    <property type="evidence" value="ECO:0007669"/>
    <property type="project" value="UniProtKB-UniPathway"/>
</dbReference>
<dbReference type="GO" id="GO:0019805">
    <property type="term" value="P:quinolinate biosynthetic process"/>
    <property type="evidence" value="ECO:0007669"/>
    <property type="project" value="UniProtKB-UniRule"/>
</dbReference>
<dbReference type="FunFam" id="3.40.640.10:FF:000031">
    <property type="entry name" value="Kynureninase"/>
    <property type="match status" value="1"/>
</dbReference>
<dbReference type="Gene3D" id="3.90.1150.10">
    <property type="entry name" value="Aspartate Aminotransferase, domain 1"/>
    <property type="match status" value="1"/>
</dbReference>
<dbReference type="Gene3D" id="3.40.640.10">
    <property type="entry name" value="Type I PLP-dependent aspartate aminotransferase-like (Major domain)"/>
    <property type="match status" value="1"/>
</dbReference>
<dbReference type="HAMAP" id="MF_01970">
    <property type="entry name" value="Kynureninase"/>
    <property type="match status" value="1"/>
</dbReference>
<dbReference type="InterPro" id="IPR010111">
    <property type="entry name" value="Kynureninase"/>
</dbReference>
<dbReference type="InterPro" id="IPR015424">
    <property type="entry name" value="PyrdxlP-dep_Trfase"/>
</dbReference>
<dbReference type="InterPro" id="IPR015421">
    <property type="entry name" value="PyrdxlP-dep_Trfase_major"/>
</dbReference>
<dbReference type="InterPro" id="IPR015422">
    <property type="entry name" value="PyrdxlP-dep_Trfase_small"/>
</dbReference>
<dbReference type="NCBIfam" id="TIGR01814">
    <property type="entry name" value="kynureninase"/>
    <property type="match status" value="1"/>
</dbReference>
<dbReference type="PANTHER" id="PTHR14084">
    <property type="entry name" value="KYNURENINASE"/>
    <property type="match status" value="1"/>
</dbReference>
<dbReference type="PANTHER" id="PTHR14084:SF0">
    <property type="entry name" value="KYNURENINASE"/>
    <property type="match status" value="1"/>
</dbReference>
<dbReference type="Pfam" id="PF22580">
    <property type="entry name" value="KYNU_C"/>
    <property type="match status" value="1"/>
</dbReference>
<dbReference type="PIRSF" id="PIRSF038800">
    <property type="entry name" value="KYNU"/>
    <property type="match status" value="1"/>
</dbReference>
<dbReference type="SUPFAM" id="SSF53383">
    <property type="entry name" value="PLP-dependent transferases"/>
    <property type="match status" value="1"/>
</dbReference>
<name>KYNU_XANOM</name>
<protein>
    <recommendedName>
        <fullName evidence="1">Kynureninase</fullName>
        <ecNumber evidence="1">3.7.1.3</ecNumber>
    </recommendedName>
    <alternativeName>
        <fullName evidence="1">L-kynurenine hydrolase</fullName>
    </alternativeName>
</protein>
<comment type="function">
    <text evidence="1">Catalyzes the cleavage of L-kynurenine (L-Kyn) and L-3-hydroxykynurenine (L-3OHKyn) into anthranilic acid (AA) and 3-hydroxyanthranilic acid (3-OHAA), respectively.</text>
</comment>
<comment type="catalytic activity">
    <reaction evidence="1">
        <text>L-kynurenine + H2O = anthranilate + L-alanine + H(+)</text>
        <dbReference type="Rhea" id="RHEA:16813"/>
        <dbReference type="ChEBI" id="CHEBI:15377"/>
        <dbReference type="ChEBI" id="CHEBI:15378"/>
        <dbReference type="ChEBI" id="CHEBI:16567"/>
        <dbReference type="ChEBI" id="CHEBI:57959"/>
        <dbReference type="ChEBI" id="CHEBI:57972"/>
        <dbReference type="EC" id="3.7.1.3"/>
    </reaction>
</comment>
<comment type="catalytic activity">
    <reaction evidence="1">
        <text>3-hydroxy-L-kynurenine + H2O = 3-hydroxyanthranilate + L-alanine + H(+)</text>
        <dbReference type="Rhea" id="RHEA:25143"/>
        <dbReference type="ChEBI" id="CHEBI:15377"/>
        <dbReference type="ChEBI" id="CHEBI:15378"/>
        <dbReference type="ChEBI" id="CHEBI:36559"/>
        <dbReference type="ChEBI" id="CHEBI:57972"/>
        <dbReference type="ChEBI" id="CHEBI:58125"/>
        <dbReference type="EC" id="3.7.1.3"/>
    </reaction>
</comment>
<comment type="cofactor">
    <cofactor evidence="1">
        <name>pyridoxal 5'-phosphate</name>
        <dbReference type="ChEBI" id="CHEBI:597326"/>
    </cofactor>
</comment>
<comment type="pathway">
    <text evidence="1">Amino-acid degradation; L-kynurenine degradation; L-alanine and anthranilate from L-kynurenine: step 1/1.</text>
</comment>
<comment type="pathway">
    <text evidence="1">Cofactor biosynthesis; NAD(+) biosynthesis; quinolinate from L-kynurenine: step 2/3.</text>
</comment>
<comment type="subunit">
    <text evidence="1">Homodimer.</text>
</comment>
<comment type="similarity">
    <text evidence="1">Belongs to the kynureninase family.</text>
</comment>
<evidence type="ECO:0000255" key="1">
    <source>
        <dbReference type="HAMAP-Rule" id="MF_01970"/>
    </source>
</evidence>
<sequence length="423" mass="46057">MTDLLSRAHADALDAADPLRSLRDAFVFPQHGDRDQTYLVGNSLGLQPRAARAMVDEVLDQWGTLGVEGHFTGPTQWLTYHQLVRDALARVVGAQPGEVVAMNTLSVNLHLMMASFYRPTHERGAILIEAGAFPSDRHAVESQLRLRGLDPATHLIEVEADEPNGTLSMAAIADAIAQHGPRLALVLWPGIQYRTGQAFDLAEIVRLARAQGAAVGCDLAHAVGNIPLTLHDDGVDFAVWCNYKYLNAGPGAVGGCFVHERHANSDLPRIAGWWGHEQQTRFRMDPQFVPSPGAEGWQLSNPPVLALAPLRASLALFDQTGMAALRAKSERLTGHLEQLIHARVPQVLQIVTPAEPMRRGCQLSLRVAGGRAQGCSLFEHLHAAGVLGDWREPDLIRIAPVPLYNRFSDLHTFVGQVEAWAAA</sequence>